<organism>
    <name type="scientific">Burkholderia thailandensis (strain ATCC 700388 / DSM 13276 / CCUG 48851 / CIP 106301 / E264)</name>
    <dbReference type="NCBI Taxonomy" id="271848"/>
    <lineage>
        <taxon>Bacteria</taxon>
        <taxon>Pseudomonadati</taxon>
        <taxon>Pseudomonadota</taxon>
        <taxon>Betaproteobacteria</taxon>
        <taxon>Burkholderiales</taxon>
        <taxon>Burkholderiaceae</taxon>
        <taxon>Burkholderia</taxon>
        <taxon>pseudomallei group</taxon>
    </lineage>
</organism>
<gene>
    <name evidence="1" type="primary">gltX</name>
    <name type="ordered locus">BTH_I1984</name>
</gene>
<accession>Q2SX36</accession>
<feature type="chain" id="PRO_0000237349" description="Glutamate--tRNA ligase">
    <location>
        <begin position="1"/>
        <end position="469"/>
    </location>
</feature>
<feature type="region of interest" description="Disordered" evidence="2">
    <location>
        <begin position="118"/>
        <end position="138"/>
    </location>
</feature>
<feature type="short sequence motif" description="'HIGH' region" evidence="1">
    <location>
        <begin position="11"/>
        <end position="21"/>
    </location>
</feature>
<feature type="short sequence motif" description="'KMSKS' region" evidence="1">
    <location>
        <begin position="243"/>
        <end position="247"/>
    </location>
</feature>
<feature type="compositionally biased region" description="Basic and acidic residues" evidence="2">
    <location>
        <begin position="118"/>
        <end position="131"/>
    </location>
</feature>
<feature type="binding site" evidence="1">
    <location>
        <position position="246"/>
    </location>
    <ligand>
        <name>ATP</name>
        <dbReference type="ChEBI" id="CHEBI:30616"/>
    </ligand>
</feature>
<feature type="strand" evidence="3">
    <location>
        <begin position="6"/>
        <end position="9"/>
    </location>
</feature>
<feature type="helix" evidence="3">
    <location>
        <begin position="19"/>
        <end position="34"/>
    </location>
</feature>
<feature type="strand" evidence="3">
    <location>
        <begin position="38"/>
        <end position="43"/>
    </location>
</feature>
<feature type="helix" evidence="3">
    <location>
        <begin position="48"/>
        <end position="50"/>
    </location>
</feature>
<feature type="helix" evidence="3">
    <location>
        <begin position="53"/>
        <end position="65"/>
    </location>
</feature>
<feature type="strand" evidence="3">
    <location>
        <begin position="71"/>
        <end position="76"/>
    </location>
</feature>
<feature type="helix" evidence="3">
    <location>
        <begin position="77"/>
        <end position="79"/>
    </location>
</feature>
<feature type="helix" evidence="3">
    <location>
        <begin position="81"/>
        <end position="93"/>
    </location>
</feature>
<feature type="strand" evidence="3">
    <location>
        <begin position="96"/>
        <end position="100"/>
    </location>
</feature>
<feature type="strand" evidence="3">
    <location>
        <begin position="145"/>
        <end position="148"/>
    </location>
</feature>
<feature type="strand" evidence="3">
    <location>
        <begin position="153"/>
        <end position="160"/>
    </location>
</feature>
<feature type="turn" evidence="3">
    <location>
        <begin position="161"/>
        <end position="163"/>
    </location>
</feature>
<feature type="strand" evidence="3">
    <location>
        <begin position="164"/>
        <end position="169"/>
    </location>
</feature>
<feature type="helix" evidence="3">
    <location>
        <begin position="170"/>
        <end position="172"/>
    </location>
</feature>
<feature type="strand" evidence="3">
    <location>
        <begin position="177"/>
        <end position="179"/>
    </location>
</feature>
<feature type="helix" evidence="3">
    <location>
        <begin position="187"/>
        <end position="197"/>
    </location>
</feature>
<feature type="strand" evidence="3">
    <location>
        <begin position="202"/>
        <end position="206"/>
    </location>
</feature>
<feature type="helix" evidence="3">
    <location>
        <begin position="207"/>
        <end position="212"/>
    </location>
</feature>
<feature type="helix" evidence="3">
    <location>
        <begin position="213"/>
        <end position="222"/>
    </location>
</feature>
<feature type="strand" evidence="3">
    <location>
        <begin position="229"/>
        <end position="233"/>
    </location>
</feature>
<feature type="strand" evidence="3">
    <location>
        <begin position="241"/>
        <end position="243"/>
    </location>
</feature>
<feature type="turn" evidence="3">
    <location>
        <begin position="246"/>
        <end position="249"/>
    </location>
</feature>
<feature type="helix" evidence="3">
    <location>
        <begin position="253"/>
        <end position="258"/>
    </location>
</feature>
<feature type="helix" evidence="3">
    <location>
        <begin position="263"/>
        <end position="271"/>
    </location>
</feature>
<feature type="strand" evidence="3">
    <location>
        <begin position="273"/>
        <end position="275"/>
    </location>
</feature>
<feature type="helix" evidence="3">
    <location>
        <begin position="285"/>
        <end position="291"/>
    </location>
</feature>
<feature type="helix" evidence="3">
    <location>
        <begin position="294"/>
        <end position="296"/>
    </location>
</feature>
<feature type="helix" evidence="3">
    <location>
        <begin position="306"/>
        <end position="319"/>
    </location>
</feature>
<feature type="helix" evidence="3">
    <location>
        <begin position="322"/>
        <end position="334"/>
    </location>
</feature>
<feature type="turn" evidence="3">
    <location>
        <begin position="335"/>
        <end position="337"/>
    </location>
</feature>
<feature type="helix" evidence="3">
    <location>
        <begin position="340"/>
        <end position="345"/>
    </location>
</feature>
<feature type="helix" evidence="3">
    <location>
        <begin position="349"/>
        <end position="356"/>
    </location>
</feature>
<feature type="helix" evidence="3">
    <location>
        <begin position="363"/>
        <end position="370"/>
    </location>
</feature>
<feature type="helix" evidence="3">
    <location>
        <begin position="371"/>
        <end position="373"/>
    </location>
</feature>
<feature type="helix" evidence="3">
    <location>
        <begin position="448"/>
        <end position="454"/>
    </location>
</feature>
<feature type="helix" evidence="3">
    <location>
        <begin position="457"/>
        <end position="465"/>
    </location>
</feature>
<name>SYE_BURTA</name>
<dbReference type="EC" id="6.1.1.17" evidence="1"/>
<dbReference type="EMBL" id="CP000086">
    <property type="protein sequence ID" value="ABC37833.1"/>
    <property type="molecule type" value="Genomic_DNA"/>
</dbReference>
<dbReference type="RefSeq" id="WP_009890362.1">
    <property type="nucleotide sequence ID" value="NZ_CP008785.1"/>
</dbReference>
<dbReference type="PDB" id="4G6Z">
    <property type="method" value="X-ray"/>
    <property type="resolution" value="2.05 A"/>
    <property type="chains" value="A=1-469"/>
</dbReference>
<dbReference type="PDBsum" id="4G6Z"/>
<dbReference type="SMR" id="Q2SX36"/>
<dbReference type="GeneID" id="45121715"/>
<dbReference type="KEGG" id="bte:BTH_I1984"/>
<dbReference type="HOGENOM" id="CLU_015768_6_0_4"/>
<dbReference type="EvolutionaryTrace" id="Q2SX36"/>
<dbReference type="Proteomes" id="UP000001930">
    <property type="component" value="Chromosome I"/>
</dbReference>
<dbReference type="GO" id="GO:0005829">
    <property type="term" value="C:cytosol"/>
    <property type="evidence" value="ECO:0007669"/>
    <property type="project" value="TreeGrafter"/>
</dbReference>
<dbReference type="GO" id="GO:0005524">
    <property type="term" value="F:ATP binding"/>
    <property type="evidence" value="ECO:0007669"/>
    <property type="project" value="UniProtKB-UniRule"/>
</dbReference>
<dbReference type="GO" id="GO:0004818">
    <property type="term" value="F:glutamate-tRNA ligase activity"/>
    <property type="evidence" value="ECO:0007669"/>
    <property type="project" value="UniProtKB-UniRule"/>
</dbReference>
<dbReference type="GO" id="GO:0000049">
    <property type="term" value="F:tRNA binding"/>
    <property type="evidence" value="ECO:0007669"/>
    <property type="project" value="InterPro"/>
</dbReference>
<dbReference type="GO" id="GO:0008270">
    <property type="term" value="F:zinc ion binding"/>
    <property type="evidence" value="ECO:0007669"/>
    <property type="project" value="InterPro"/>
</dbReference>
<dbReference type="GO" id="GO:0006424">
    <property type="term" value="P:glutamyl-tRNA aminoacylation"/>
    <property type="evidence" value="ECO:0007669"/>
    <property type="project" value="UniProtKB-UniRule"/>
</dbReference>
<dbReference type="CDD" id="cd00808">
    <property type="entry name" value="GluRS_core"/>
    <property type="match status" value="1"/>
</dbReference>
<dbReference type="FunFam" id="3.40.50.620:FF:000007">
    <property type="entry name" value="Glutamate--tRNA ligase"/>
    <property type="match status" value="1"/>
</dbReference>
<dbReference type="Gene3D" id="1.10.10.350">
    <property type="match status" value="1"/>
</dbReference>
<dbReference type="Gene3D" id="3.40.50.620">
    <property type="entry name" value="HUPs"/>
    <property type="match status" value="1"/>
</dbReference>
<dbReference type="HAMAP" id="MF_00022">
    <property type="entry name" value="Glu_tRNA_synth_type1"/>
    <property type="match status" value="1"/>
</dbReference>
<dbReference type="InterPro" id="IPR045462">
    <property type="entry name" value="aa-tRNA-synth_I_cd-bd"/>
</dbReference>
<dbReference type="InterPro" id="IPR020751">
    <property type="entry name" value="aa-tRNA-synth_I_codon-bd_sub2"/>
</dbReference>
<dbReference type="InterPro" id="IPR001412">
    <property type="entry name" value="aa-tRNA-synth_I_CS"/>
</dbReference>
<dbReference type="InterPro" id="IPR008925">
    <property type="entry name" value="aa_tRNA-synth_I_cd-bd_sf"/>
</dbReference>
<dbReference type="InterPro" id="IPR004527">
    <property type="entry name" value="Glu-tRNA-ligase_bac/mito"/>
</dbReference>
<dbReference type="InterPro" id="IPR000924">
    <property type="entry name" value="Glu/Gln-tRNA-synth"/>
</dbReference>
<dbReference type="InterPro" id="IPR020058">
    <property type="entry name" value="Glu/Gln-tRNA-synth_Ib_cat-dom"/>
</dbReference>
<dbReference type="InterPro" id="IPR049940">
    <property type="entry name" value="GluQ/Sye"/>
</dbReference>
<dbReference type="InterPro" id="IPR033910">
    <property type="entry name" value="GluRS_core"/>
</dbReference>
<dbReference type="InterPro" id="IPR014729">
    <property type="entry name" value="Rossmann-like_a/b/a_fold"/>
</dbReference>
<dbReference type="NCBIfam" id="TIGR00464">
    <property type="entry name" value="gltX_bact"/>
    <property type="match status" value="1"/>
</dbReference>
<dbReference type="PANTHER" id="PTHR43311">
    <property type="entry name" value="GLUTAMATE--TRNA LIGASE"/>
    <property type="match status" value="1"/>
</dbReference>
<dbReference type="PANTHER" id="PTHR43311:SF2">
    <property type="entry name" value="GLUTAMATE--TRNA LIGASE, MITOCHONDRIAL-RELATED"/>
    <property type="match status" value="1"/>
</dbReference>
<dbReference type="Pfam" id="PF19269">
    <property type="entry name" value="Anticodon_2"/>
    <property type="match status" value="1"/>
</dbReference>
<dbReference type="Pfam" id="PF00749">
    <property type="entry name" value="tRNA-synt_1c"/>
    <property type="match status" value="1"/>
</dbReference>
<dbReference type="PRINTS" id="PR00987">
    <property type="entry name" value="TRNASYNTHGLU"/>
</dbReference>
<dbReference type="SUPFAM" id="SSF48163">
    <property type="entry name" value="An anticodon-binding domain of class I aminoacyl-tRNA synthetases"/>
    <property type="match status" value="1"/>
</dbReference>
<dbReference type="SUPFAM" id="SSF52374">
    <property type="entry name" value="Nucleotidylyl transferase"/>
    <property type="match status" value="1"/>
</dbReference>
<dbReference type="PROSITE" id="PS00178">
    <property type="entry name" value="AA_TRNA_LIGASE_I"/>
    <property type="match status" value="1"/>
</dbReference>
<proteinExistence type="evidence at protein level"/>
<comment type="function">
    <text evidence="1">Catalyzes the attachment of glutamate to tRNA(Glu) in a two-step reaction: glutamate is first activated by ATP to form Glu-AMP and then transferred to the acceptor end of tRNA(Glu).</text>
</comment>
<comment type="catalytic activity">
    <reaction evidence="1">
        <text>tRNA(Glu) + L-glutamate + ATP = L-glutamyl-tRNA(Glu) + AMP + diphosphate</text>
        <dbReference type="Rhea" id="RHEA:23540"/>
        <dbReference type="Rhea" id="RHEA-COMP:9663"/>
        <dbReference type="Rhea" id="RHEA-COMP:9680"/>
        <dbReference type="ChEBI" id="CHEBI:29985"/>
        <dbReference type="ChEBI" id="CHEBI:30616"/>
        <dbReference type="ChEBI" id="CHEBI:33019"/>
        <dbReference type="ChEBI" id="CHEBI:78442"/>
        <dbReference type="ChEBI" id="CHEBI:78520"/>
        <dbReference type="ChEBI" id="CHEBI:456215"/>
        <dbReference type="EC" id="6.1.1.17"/>
    </reaction>
</comment>
<comment type="subunit">
    <text evidence="1">Monomer.</text>
</comment>
<comment type="subcellular location">
    <subcellularLocation>
        <location evidence="1">Cytoplasm</location>
    </subcellularLocation>
</comment>
<comment type="similarity">
    <text evidence="1">Belongs to the class-I aminoacyl-tRNA synthetase family. Glutamate--tRNA ligase type 1 subfamily.</text>
</comment>
<reference key="1">
    <citation type="journal article" date="2005" name="BMC Genomics">
        <title>Bacterial genome adaptation to niches: divergence of the potential virulence genes in three Burkholderia species of different survival strategies.</title>
        <authorList>
            <person name="Kim H.S."/>
            <person name="Schell M.A."/>
            <person name="Yu Y."/>
            <person name="Ulrich R.L."/>
            <person name="Sarria S.H."/>
            <person name="Nierman W.C."/>
            <person name="DeShazer D."/>
        </authorList>
    </citation>
    <scope>NUCLEOTIDE SEQUENCE [LARGE SCALE GENOMIC DNA]</scope>
    <source>
        <strain>ATCC 700388 / DSM 13276 / CCUG 48851 / CIP 106301 / E264</strain>
    </source>
</reference>
<keyword id="KW-0002">3D-structure</keyword>
<keyword id="KW-0030">Aminoacyl-tRNA synthetase</keyword>
<keyword id="KW-0067">ATP-binding</keyword>
<keyword id="KW-0963">Cytoplasm</keyword>
<keyword id="KW-0436">Ligase</keyword>
<keyword id="KW-0547">Nucleotide-binding</keyword>
<keyword id="KW-0648">Protein biosynthesis</keyword>
<evidence type="ECO:0000255" key="1">
    <source>
        <dbReference type="HAMAP-Rule" id="MF_00022"/>
    </source>
</evidence>
<evidence type="ECO:0000256" key="2">
    <source>
        <dbReference type="SAM" id="MobiDB-lite"/>
    </source>
</evidence>
<evidence type="ECO:0007829" key="3">
    <source>
        <dbReference type="PDB" id="4G6Z"/>
    </source>
</evidence>
<sequence length="469" mass="52046">MTRPVRTRFAPSPTGFIHLGNIRSALYPWAFARKMKGTFVLRIEDTDVERSSQEAVDAILEGMAWLGLDYDEGPYYQMQRMDRYREVLAQMQEKGLVYPCYMSTEELDALRERQRAAGEKPRYDGTWRPEPGKVLPEPPAGVAPVLRFRNPLTGTVAWDDAVKGRVEISNEELDDLVVARPDGTPMYNFCVVVDDLDMGITHVIRGDDHVNNTPRQINILRALGGEVPVYAHLPTVLNEQGEKMSKRHGAMSVMGYRDAGYLPEAVLNYLARLGWSHGDAEIFTREQFVEWFDLEHLGKSPAQYDHNKLNWLNNHYIKEADDARLAGLAKPFFAALGIDAGAIEQGPDLVSVMGLMKDRASTVKEIAENSAMFYRAPAPGADALAQHVTDAVRPALVEFAAALKTVEWTKEAIAAALKAVLGAHKLKMPQLAMPVRLLVAGTTHTPSIDAVLLLFGRDVVVSRIEAALA</sequence>
<protein>
    <recommendedName>
        <fullName evidence="1">Glutamate--tRNA ligase</fullName>
        <ecNumber evidence="1">6.1.1.17</ecNumber>
    </recommendedName>
    <alternativeName>
        <fullName evidence="1">Glutamyl-tRNA synthetase</fullName>
        <shortName evidence="1">GluRS</shortName>
    </alternativeName>
</protein>